<comment type="function">
    <text evidence="1">Core subunit of the mitochondrial membrane respiratory chain NADH dehydrogenase (Complex I) which catalyzes electron transfer from NADH through the respiratory chain, using ubiquinone as an electron acceptor. Part of the enzyme membrane arm which is embedded in the lipid bilayer and involved in proton translocation.</text>
</comment>
<comment type="catalytic activity">
    <reaction evidence="1">
        <text>a ubiquinone + NADH + 5 H(+)(in) = a ubiquinol + NAD(+) + 4 H(+)(out)</text>
        <dbReference type="Rhea" id="RHEA:29091"/>
        <dbReference type="Rhea" id="RHEA-COMP:9565"/>
        <dbReference type="Rhea" id="RHEA-COMP:9566"/>
        <dbReference type="ChEBI" id="CHEBI:15378"/>
        <dbReference type="ChEBI" id="CHEBI:16389"/>
        <dbReference type="ChEBI" id="CHEBI:17976"/>
        <dbReference type="ChEBI" id="CHEBI:57540"/>
        <dbReference type="ChEBI" id="CHEBI:57945"/>
        <dbReference type="EC" id="7.1.1.2"/>
    </reaction>
    <physiologicalReaction direction="left-to-right" evidence="1">
        <dbReference type="Rhea" id="RHEA:29092"/>
    </physiologicalReaction>
</comment>
<comment type="subunit">
    <text evidence="2">Core subunit of respiratory chain NADH dehydrogenase (Complex I) which is composed of 45 different subunits.</text>
</comment>
<comment type="subcellular location">
    <subcellularLocation>
        <location evidence="2">Mitochondrion inner membrane</location>
        <topology evidence="3">Multi-pass membrane protein</topology>
    </subcellularLocation>
</comment>
<comment type="similarity">
    <text evidence="4">Belongs to the complex I subunit 4L family.</text>
</comment>
<evidence type="ECO:0000250" key="1">
    <source>
        <dbReference type="UniProtKB" id="P03901"/>
    </source>
</evidence>
<evidence type="ECO:0000250" key="2">
    <source>
        <dbReference type="UniProtKB" id="P03902"/>
    </source>
</evidence>
<evidence type="ECO:0000255" key="3"/>
<evidence type="ECO:0000305" key="4"/>
<name>NU4LM_BALOM</name>
<geneLocation type="mitochondrion"/>
<keyword id="KW-0249">Electron transport</keyword>
<keyword id="KW-0472">Membrane</keyword>
<keyword id="KW-0496">Mitochondrion</keyword>
<keyword id="KW-0999">Mitochondrion inner membrane</keyword>
<keyword id="KW-0520">NAD</keyword>
<keyword id="KW-0679">Respiratory chain</keyword>
<keyword id="KW-1278">Translocase</keyword>
<keyword id="KW-0812">Transmembrane</keyword>
<keyword id="KW-1133">Transmembrane helix</keyword>
<keyword id="KW-0813">Transport</keyword>
<keyword id="KW-0830">Ubiquinone</keyword>
<proteinExistence type="inferred from homology"/>
<sequence length="98" mass="10745">MTLIHMNILMAFSMSLVGLLMYRSHLMSALLCLEGMMLSLFILAALTILNSHFTLANMMPIILLVFAACEAAIGLALLVMVSNTYGTDYVQSLNLLQC</sequence>
<reference key="1">
    <citation type="journal article" date="2006" name="Mol. Phylogenet. Evol.">
        <title>Balaenoptera omurai is a newly discovered baleen whale that represents an ancient evolutionary lineage.</title>
        <authorList>
            <person name="Sasaki T."/>
            <person name="Nikaido M."/>
            <person name="Wada S."/>
            <person name="Yamada T.K."/>
            <person name="Cao Y."/>
            <person name="Hasegawa M."/>
            <person name="Okada N."/>
        </authorList>
    </citation>
    <scope>NUCLEOTIDE SEQUENCE [GENOMIC DNA]</scope>
    <source>
        <strain>Isolate NSMT-32505</strain>
        <strain>Isolate NSMT-32992</strain>
        <tissue>Muscle</tissue>
    </source>
</reference>
<protein>
    <recommendedName>
        <fullName>NADH-ubiquinone oxidoreductase chain 4L</fullName>
        <ecNumber>7.1.1.2</ecNumber>
    </recommendedName>
    <alternativeName>
        <fullName>NADH dehydrogenase subunit 4L</fullName>
    </alternativeName>
</protein>
<accession>Q25CE8</accession>
<gene>
    <name type="primary">MT-ND4L</name>
    <name type="synonym">MTND4L</name>
    <name type="synonym">NADH4L</name>
    <name type="synonym">ND4L</name>
</gene>
<organism>
    <name type="scientific">Balaenoptera omurai</name>
    <name type="common">Omura's baleen whale</name>
    <dbReference type="NCBI Taxonomy" id="255217"/>
    <lineage>
        <taxon>Eukaryota</taxon>
        <taxon>Metazoa</taxon>
        <taxon>Chordata</taxon>
        <taxon>Craniata</taxon>
        <taxon>Vertebrata</taxon>
        <taxon>Euteleostomi</taxon>
        <taxon>Mammalia</taxon>
        <taxon>Eutheria</taxon>
        <taxon>Laurasiatheria</taxon>
        <taxon>Artiodactyla</taxon>
        <taxon>Whippomorpha</taxon>
        <taxon>Cetacea</taxon>
        <taxon>Mysticeti</taxon>
        <taxon>Balaenopteridae</taxon>
        <taxon>Balaenoptera</taxon>
    </lineage>
</organism>
<dbReference type="EC" id="7.1.1.2"/>
<dbReference type="EMBL" id="AB201256">
    <property type="protein sequence ID" value="BAE91835.1"/>
    <property type="molecule type" value="Genomic_DNA"/>
</dbReference>
<dbReference type="EMBL" id="AB201257">
    <property type="protein sequence ID" value="BAE91848.1"/>
    <property type="molecule type" value="Genomic_DNA"/>
</dbReference>
<dbReference type="RefSeq" id="YP_537140.1">
    <property type="nucleotide sequence ID" value="NC_007937.1"/>
</dbReference>
<dbReference type="SMR" id="Q25CE8"/>
<dbReference type="GeneID" id="3979269"/>
<dbReference type="CTD" id="4539"/>
<dbReference type="GO" id="GO:0005743">
    <property type="term" value="C:mitochondrial inner membrane"/>
    <property type="evidence" value="ECO:0000250"/>
    <property type="project" value="UniProtKB"/>
</dbReference>
<dbReference type="GO" id="GO:0045271">
    <property type="term" value="C:respiratory chain complex I"/>
    <property type="evidence" value="ECO:0000250"/>
    <property type="project" value="UniProtKB"/>
</dbReference>
<dbReference type="GO" id="GO:0008137">
    <property type="term" value="F:NADH dehydrogenase (ubiquinone) activity"/>
    <property type="evidence" value="ECO:0000250"/>
    <property type="project" value="UniProtKB"/>
</dbReference>
<dbReference type="GO" id="GO:0042773">
    <property type="term" value="P:ATP synthesis coupled electron transport"/>
    <property type="evidence" value="ECO:0007669"/>
    <property type="project" value="InterPro"/>
</dbReference>
<dbReference type="FunFam" id="1.10.287.3510:FF:000002">
    <property type="entry name" value="NADH-ubiquinone oxidoreductase chain 4L"/>
    <property type="match status" value="1"/>
</dbReference>
<dbReference type="Gene3D" id="1.10.287.3510">
    <property type="match status" value="1"/>
</dbReference>
<dbReference type="InterPro" id="IPR001133">
    <property type="entry name" value="NADH_UbQ_OxRdtase_chain4L/K"/>
</dbReference>
<dbReference type="InterPro" id="IPR039428">
    <property type="entry name" value="NUOK/Mnh_C1-like"/>
</dbReference>
<dbReference type="PANTHER" id="PTHR11434:SF0">
    <property type="entry name" value="NADH-UBIQUINONE OXIDOREDUCTASE CHAIN 4L"/>
    <property type="match status" value="1"/>
</dbReference>
<dbReference type="PANTHER" id="PTHR11434">
    <property type="entry name" value="NADH-UBIQUINONE OXIDOREDUCTASE SUBUNIT ND4L"/>
    <property type="match status" value="1"/>
</dbReference>
<dbReference type="Pfam" id="PF00420">
    <property type="entry name" value="Oxidored_q2"/>
    <property type="match status" value="1"/>
</dbReference>
<feature type="chain" id="PRO_0000274980" description="NADH-ubiquinone oxidoreductase chain 4L">
    <location>
        <begin position="1"/>
        <end position="98"/>
    </location>
</feature>
<feature type="transmembrane region" description="Helical" evidence="3">
    <location>
        <begin position="1"/>
        <end position="21"/>
    </location>
</feature>
<feature type="transmembrane region" description="Helical" evidence="3">
    <location>
        <begin position="29"/>
        <end position="49"/>
    </location>
</feature>
<feature type="transmembrane region" description="Helical" evidence="3">
    <location>
        <begin position="61"/>
        <end position="81"/>
    </location>
</feature>